<evidence type="ECO:0000255" key="1">
    <source>
        <dbReference type="HAMAP-Rule" id="MF_00122"/>
    </source>
</evidence>
<proteinExistence type="inferred from homology"/>
<sequence>MERRDFKEQLKKTAHLARLHLTPEEEELFAKQLQNILDYFKKLQELDTSNVEPMAHVLPLYNIWREDEVRESISQEEALKNAPEIEDLGFKIPRIMKREE</sequence>
<comment type="function">
    <text evidence="1">Allows the formation of correctly charged Asn-tRNA(Asn) or Gln-tRNA(Gln) through the transamidation of misacylated Asp-tRNA(Asn) or Glu-tRNA(Gln) in organisms which lack either or both of asparaginyl-tRNA or glutaminyl-tRNA synthetases. The reaction takes place in the presence of glutamine and ATP through an activated phospho-Asp-tRNA(Asn) or phospho-Glu-tRNA(Gln).</text>
</comment>
<comment type="catalytic activity">
    <reaction evidence="1">
        <text>L-glutamyl-tRNA(Gln) + L-glutamine + ATP + H2O = L-glutaminyl-tRNA(Gln) + L-glutamate + ADP + phosphate + H(+)</text>
        <dbReference type="Rhea" id="RHEA:17521"/>
        <dbReference type="Rhea" id="RHEA-COMP:9681"/>
        <dbReference type="Rhea" id="RHEA-COMP:9684"/>
        <dbReference type="ChEBI" id="CHEBI:15377"/>
        <dbReference type="ChEBI" id="CHEBI:15378"/>
        <dbReference type="ChEBI" id="CHEBI:29985"/>
        <dbReference type="ChEBI" id="CHEBI:30616"/>
        <dbReference type="ChEBI" id="CHEBI:43474"/>
        <dbReference type="ChEBI" id="CHEBI:58359"/>
        <dbReference type="ChEBI" id="CHEBI:78520"/>
        <dbReference type="ChEBI" id="CHEBI:78521"/>
        <dbReference type="ChEBI" id="CHEBI:456216"/>
    </reaction>
</comment>
<comment type="catalytic activity">
    <reaction evidence="1">
        <text>L-aspartyl-tRNA(Asn) + L-glutamine + ATP + H2O = L-asparaginyl-tRNA(Asn) + L-glutamate + ADP + phosphate + 2 H(+)</text>
        <dbReference type="Rhea" id="RHEA:14513"/>
        <dbReference type="Rhea" id="RHEA-COMP:9674"/>
        <dbReference type="Rhea" id="RHEA-COMP:9677"/>
        <dbReference type="ChEBI" id="CHEBI:15377"/>
        <dbReference type="ChEBI" id="CHEBI:15378"/>
        <dbReference type="ChEBI" id="CHEBI:29985"/>
        <dbReference type="ChEBI" id="CHEBI:30616"/>
        <dbReference type="ChEBI" id="CHEBI:43474"/>
        <dbReference type="ChEBI" id="CHEBI:58359"/>
        <dbReference type="ChEBI" id="CHEBI:78515"/>
        <dbReference type="ChEBI" id="CHEBI:78516"/>
        <dbReference type="ChEBI" id="CHEBI:456216"/>
    </reaction>
</comment>
<comment type="subunit">
    <text evidence="1">Heterotrimer of A, B and C subunits.</text>
</comment>
<comment type="similarity">
    <text evidence="1">Belongs to the GatC family.</text>
</comment>
<name>GATC_DICT6</name>
<accession>B5YEC9</accession>
<gene>
    <name evidence="1" type="primary">gatC</name>
    <name type="ordered locus">DICTH_1038</name>
</gene>
<keyword id="KW-0067">ATP-binding</keyword>
<keyword id="KW-0436">Ligase</keyword>
<keyword id="KW-0547">Nucleotide-binding</keyword>
<keyword id="KW-0648">Protein biosynthesis</keyword>
<protein>
    <recommendedName>
        <fullName evidence="1">Aspartyl/glutamyl-tRNA(Asn/Gln) amidotransferase subunit C</fullName>
        <shortName evidence="1">Asp/Glu-ADT subunit C</shortName>
        <ecNumber evidence="1">6.3.5.-</ecNumber>
    </recommendedName>
</protein>
<reference key="1">
    <citation type="journal article" date="2014" name="Genome Announc.">
        <title>Complete Genome Sequence of the Extreme Thermophile Dictyoglomus thermophilum H-6-12.</title>
        <authorList>
            <person name="Coil D.A."/>
            <person name="Badger J.H."/>
            <person name="Forberger H.C."/>
            <person name="Riggs F."/>
            <person name="Madupu R."/>
            <person name="Fedorova N."/>
            <person name="Ward N."/>
            <person name="Robb F.T."/>
            <person name="Eisen J.A."/>
        </authorList>
    </citation>
    <scope>NUCLEOTIDE SEQUENCE [LARGE SCALE GENOMIC DNA]</scope>
    <source>
        <strain>ATCC 35947 / DSM 3960 / H-6-12</strain>
    </source>
</reference>
<dbReference type="EC" id="6.3.5.-" evidence="1"/>
<dbReference type="EMBL" id="CP001146">
    <property type="protein sequence ID" value="ACI18477.1"/>
    <property type="molecule type" value="Genomic_DNA"/>
</dbReference>
<dbReference type="RefSeq" id="WP_012547109.1">
    <property type="nucleotide sequence ID" value="NC_011297.1"/>
</dbReference>
<dbReference type="SMR" id="B5YEC9"/>
<dbReference type="STRING" id="309799.DICTH_1038"/>
<dbReference type="PaxDb" id="309799-DICTH_1038"/>
<dbReference type="KEGG" id="dth:DICTH_1038"/>
<dbReference type="eggNOG" id="COG0721">
    <property type="taxonomic scope" value="Bacteria"/>
</dbReference>
<dbReference type="HOGENOM" id="CLU_105899_6_1_0"/>
<dbReference type="OrthoDB" id="9813938at2"/>
<dbReference type="Proteomes" id="UP000001733">
    <property type="component" value="Chromosome"/>
</dbReference>
<dbReference type="GO" id="GO:0050566">
    <property type="term" value="F:asparaginyl-tRNA synthase (glutamine-hydrolyzing) activity"/>
    <property type="evidence" value="ECO:0007669"/>
    <property type="project" value="RHEA"/>
</dbReference>
<dbReference type="GO" id="GO:0005524">
    <property type="term" value="F:ATP binding"/>
    <property type="evidence" value="ECO:0007669"/>
    <property type="project" value="UniProtKB-KW"/>
</dbReference>
<dbReference type="GO" id="GO:0050567">
    <property type="term" value="F:glutaminyl-tRNA synthase (glutamine-hydrolyzing) activity"/>
    <property type="evidence" value="ECO:0007669"/>
    <property type="project" value="UniProtKB-UniRule"/>
</dbReference>
<dbReference type="GO" id="GO:0070681">
    <property type="term" value="P:glutaminyl-tRNAGln biosynthesis via transamidation"/>
    <property type="evidence" value="ECO:0007669"/>
    <property type="project" value="TreeGrafter"/>
</dbReference>
<dbReference type="GO" id="GO:0006450">
    <property type="term" value="P:regulation of translational fidelity"/>
    <property type="evidence" value="ECO:0007669"/>
    <property type="project" value="InterPro"/>
</dbReference>
<dbReference type="GO" id="GO:0006412">
    <property type="term" value="P:translation"/>
    <property type="evidence" value="ECO:0007669"/>
    <property type="project" value="UniProtKB-UniRule"/>
</dbReference>
<dbReference type="Gene3D" id="1.10.20.60">
    <property type="entry name" value="Glu-tRNAGln amidotransferase C subunit, N-terminal domain"/>
    <property type="match status" value="1"/>
</dbReference>
<dbReference type="HAMAP" id="MF_00122">
    <property type="entry name" value="GatC"/>
    <property type="match status" value="1"/>
</dbReference>
<dbReference type="InterPro" id="IPR036113">
    <property type="entry name" value="Asp/Glu-ADT_sf_sub_c"/>
</dbReference>
<dbReference type="InterPro" id="IPR003837">
    <property type="entry name" value="GatC"/>
</dbReference>
<dbReference type="NCBIfam" id="TIGR00135">
    <property type="entry name" value="gatC"/>
    <property type="match status" value="1"/>
</dbReference>
<dbReference type="PANTHER" id="PTHR15004">
    <property type="entry name" value="GLUTAMYL-TRNA(GLN) AMIDOTRANSFERASE SUBUNIT C, MITOCHONDRIAL"/>
    <property type="match status" value="1"/>
</dbReference>
<dbReference type="PANTHER" id="PTHR15004:SF0">
    <property type="entry name" value="GLUTAMYL-TRNA(GLN) AMIDOTRANSFERASE SUBUNIT C, MITOCHONDRIAL"/>
    <property type="match status" value="1"/>
</dbReference>
<dbReference type="Pfam" id="PF02686">
    <property type="entry name" value="GatC"/>
    <property type="match status" value="1"/>
</dbReference>
<dbReference type="SUPFAM" id="SSF141000">
    <property type="entry name" value="Glu-tRNAGln amidotransferase C subunit"/>
    <property type="match status" value="1"/>
</dbReference>
<organism>
    <name type="scientific">Dictyoglomus thermophilum (strain ATCC 35947 / DSM 3960 / H-6-12)</name>
    <dbReference type="NCBI Taxonomy" id="309799"/>
    <lineage>
        <taxon>Bacteria</taxon>
        <taxon>Pseudomonadati</taxon>
        <taxon>Dictyoglomota</taxon>
        <taxon>Dictyoglomia</taxon>
        <taxon>Dictyoglomales</taxon>
        <taxon>Dictyoglomaceae</taxon>
        <taxon>Dictyoglomus</taxon>
    </lineage>
</organism>
<feature type="chain" id="PRO_1000117633" description="Aspartyl/glutamyl-tRNA(Asn/Gln) amidotransferase subunit C">
    <location>
        <begin position="1"/>
        <end position="100"/>
    </location>
</feature>